<proteinExistence type="evidence at transcript level"/>
<sequence length="715" mass="77587">MPAESGKRFKPSKYVPVSAAAIFLVGATTLFFAFTCPGLSLYVSPAVPIYNAIMFLFVLANFSMATFMDPGIFPRAEEDEDKEDDFRAPLYKTVEIKGIQVRMKWCATCRFYRPPRCSHCSVCDNCVEEFDHHCPWVNNCIGRRNYRYFFLFLLSLTAHIMGVFGFGLLYVLYHIEELSGVRTAVTMAVMCVAGLFFIPVAGLTGFHVVLVARGRTTNEQVTGKFRGGVNPFTNGCCNNVSRVLCSSPAPRYLGRPKKEKTIVIRPPFLRPEVSDGQITVKIMDNGIQGELRRTKSKGSLEITESQSADAEPPPPPKPDLSRYTGLRTHLGLATNEDSSLLAKDSPPTPTMYKYRPGYSSSSTSAAMPHSSSAKLSRGDSLKEPTSIAESSRHPSYRSEPSLEPESFRSPTFGKSFHFDPLSSGSRSSSLKSAQGTGFELGQLQSIRSEGTTSTSYKSLANQTRNGSLSYDSLLTPSDSPDFESVQAGPEPDPPLGYTSPFLSARLAQQREAERHPRLVPTGPTHREPSPVRYDNLSRHIVASLQEREKLLRQSPPLPVREEEPGLGDSGIQSTPGSGHAPRTSSSSDDSKRSPLGKTPLGRPAVPRFGKPDGLRGRGVGSPEPGPTAPYLGRSMSYSSQKAQPGVSETEEVALQPLLTPKDEVQLKTTYSKSNGQPKSLGSASPGPGQPPLSSPTRGGVKKVSGVGGTTYEISV</sequence>
<reference key="1">
    <citation type="submission" date="2004-12" db="EMBL/GenBank/DDBJ databases">
        <title>A superfamily of membrane-associated DHHC type zinc finger proteins.</title>
        <authorList>
            <person name="Chen Y."/>
            <person name="Huang C.-H."/>
        </authorList>
    </citation>
    <scope>NUCLEOTIDE SEQUENCE [MRNA]</scope>
</reference>
<comment type="function">
    <text evidence="2 3">Palmitoyltransferase that catalyzes the addition of palmitate onto various protein substrates such as CTNND2, CD36, GSDMD, NLRP3, NOD1, NOD2, STAT3 and S1PR1 thus plays a role in various biological processes including cell adhesion, inflammation, fatty acid uptake, bacterial sensing or cardiac functions. Plays an important role in the regulation of synapse efficacy by mediating palmitoylation of delta-catenin/CTNND2, thereby increasing synaptic delivery and surface stabilization of alpha-amino-3-hydroxy-5-methyl-4-isoxazole propionic acid receptors (AMPARs). Under basal conditions, remains at the synaptic membrane through FYN-mediated phosphorylation that prevents association with endocytic proteins. Neuronal activity enhances the internalization and trafficking of DHHC5 from spines to dendritic shafts where it palmitoylates delta-catenin/CTNND2. Regulates cell adhesion at the plasma membrane by palmitoylating GOLGA7B and DSG2. Plays a role in innate immune response by mediating the palmitoylation of NOD1 and NOD2 and their proper recruitment to the bacterial entry site and phagosomes. Also participates in fatty acid uptake by palmitoylating CD36 and thereby targeting it to the plasma membrane. Upon binding of fatty acids to CD36, gets phosphorylated by LYN leading to inactivation and subsequent CD36 caveolar endocytosis (By similarity). Controls oligodendrocyte development by catalyzing STAT3 palmitoylation (By similarity). Acts as a regulator of inflammatory response by mediating palmitoylation of NLRP3 and GSDMD. Palmitoylates NLRP3 to promote inflammasome assembly and activation. Activates pyroptosis by catalyzing palmitoylation of gasdermin-D (GSDMD), thereby promoting membrane translocation and pore formation of GSDMD (By similarity).</text>
</comment>
<comment type="catalytic activity">
    <reaction evidence="2">
        <text>L-cysteinyl-[protein] + hexadecanoyl-CoA = S-hexadecanoyl-L-cysteinyl-[protein] + CoA</text>
        <dbReference type="Rhea" id="RHEA:36683"/>
        <dbReference type="Rhea" id="RHEA-COMP:10131"/>
        <dbReference type="Rhea" id="RHEA-COMP:11032"/>
        <dbReference type="ChEBI" id="CHEBI:29950"/>
        <dbReference type="ChEBI" id="CHEBI:57287"/>
        <dbReference type="ChEBI" id="CHEBI:57379"/>
        <dbReference type="ChEBI" id="CHEBI:74151"/>
        <dbReference type="EC" id="2.3.1.225"/>
    </reaction>
    <physiologicalReaction direction="left-to-right" evidence="2">
        <dbReference type="Rhea" id="RHEA:36684"/>
    </physiologicalReaction>
</comment>
<comment type="subcellular location">
    <subcellularLocation>
        <location evidence="2">Cell membrane</location>
        <topology evidence="4">Multi-pass membrane protein</topology>
    </subcellularLocation>
</comment>
<comment type="domain">
    <text evidence="1">The DHHC domain is required for palmitoyltransferase activity.</text>
</comment>
<comment type="similarity">
    <text evidence="7">Belongs to the DHHC palmitoyltransferase family. ERF2/ZDHHC9 subfamily.</text>
</comment>
<organism>
    <name type="scientific">Pan troglodytes</name>
    <name type="common">Chimpanzee</name>
    <dbReference type="NCBI Taxonomy" id="9598"/>
    <lineage>
        <taxon>Eukaryota</taxon>
        <taxon>Metazoa</taxon>
        <taxon>Chordata</taxon>
        <taxon>Craniata</taxon>
        <taxon>Vertebrata</taxon>
        <taxon>Euteleostomi</taxon>
        <taxon>Mammalia</taxon>
        <taxon>Eutheria</taxon>
        <taxon>Euarchontoglires</taxon>
        <taxon>Primates</taxon>
        <taxon>Haplorrhini</taxon>
        <taxon>Catarrhini</taxon>
        <taxon>Hominidae</taxon>
        <taxon>Pan</taxon>
    </lineage>
</organism>
<evidence type="ECO:0000250" key="1">
    <source>
        <dbReference type="UniProtKB" id="Q8IUH5"/>
    </source>
</evidence>
<evidence type="ECO:0000250" key="2">
    <source>
        <dbReference type="UniProtKB" id="Q8VDZ4"/>
    </source>
</evidence>
<evidence type="ECO:0000250" key="3">
    <source>
        <dbReference type="UniProtKB" id="Q9C0B5"/>
    </source>
</evidence>
<evidence type="ECO:0000255" key="4"/>
<evidence type="ECO:0000255" key="5">
    <source>
        <dbReference type="PROSITE-ProRule" id="PRU00067"/>
    </source>
</evidence>
<evidence type="ECO:0000256" key="6">
    <source>
        <dbReference type="SAM" id="MobiDB-lite"/>
    </source>
</evidence>
<evidence type="ECO:0000305" key="7"/>
<feature type="chain" id="PRO_0000232437" description="Palmitoyltransferase ZDHHC5">
    <location>
        <begin position="1"/>
        <end position="715"/>
    </location>
</feature>
<feature type="topological domain" description="Cytoplasmic" evidence="4">
    <location>
        <begin position="1"/>
        <end position="13"/>
    </location>
</feature>
<feature type="transmembrane region" description="Helical" evidence="4">
    <location>
        <begin position="14"/>
        <end position="34"/>
    </location>
</feature>
<feature type="topological domain" description="Extracellular" evidence="4">
    <location>
        <begin position="35"/>
        <end position="38"/>
    </location>
</feature>
<feature type="transmembrane region" description="Helical" evidence="4">
    <location>
        <begin position="39"/>
        <end position="59"/>
    </location>
</feature>
<feature type="topological domain" description="Cytoplasmic" evidence="4">
    <location>
        <begin position="60"/>
        <end position="148"/>
    </location>
</feature>
<feature type="transmembrane region" description="Helical" evidence="4">
    <location>
        <begin position="149"/>
        <end position="169"/>
    </location>
</feature>
<feature type="topological domain" description="Extracellular" evidence="4">
    <location>
        <begin position="170"/>
        <end position="191"/>
    </location>
</feature>
<feature type="transmembrane region" description="Helical" evidence="4">
    <location>
        <begin position="192"/>
        <end position="212"/>
    </location>
</feature>
<feature type="topological domain" description="Cytoplasmic" evidence="4">
    <location>
        <begin position="213"/>
        <end position="715"/>
    </location>
</feature>
<feature type="domain" description="DHHC" evidence="5">
    <location>
        <begin position="104"/>
        <end position="154"/>
    </location>
</feature>
<feature type="region of interest" description="Disordered" evidence="6">
    <location>
        <begin position="289"/>
        <end position="715"/>
    </location>
</feature>
<feature type="compositionally biased region" description="Low complexity" evidence="6">
    <location>
        <begin position="359"/>
        <end position="373"/>
    </location>
</feature>
<feature type="compositionally biased region" description="Low complexity" evidence="6">
    <location>
        <begin position="422"/>
        <end position="432"/>
    </location>
</feature>
<feature type="compositionally biased region" description="Polar residues" evidence="6">
    <location>
        <begin position="442"/>
        <end position="478"/>
    </location>
</feature>
<feature type="compositionally biased region" description="Polar residues" evidence="6">
    <location>
        <begin position="666"/>
        <end position="677"/>
    </location>
</feature>
<feature type="active site" description="S-palmitoyl cysteine intermediate" evidence="2">
    <location>
        <position position="134"/>
    </location>
</feature>
<feature type="modified residue" description="Phosphotyrosine" evidence="2">
    <location>
        <position position="91"/>
    </location>
</feature>
<feature type="modified residue" description="Phosphoserine" evidence="3">
    <location>
        <position position="247"/>
    </location>
</feature>
<feature type="modified residue" description="Phosphothreonine" evidence="2">
    <location>
        <position position="294"/>
    </location>
</feature>
<feature type="modified residue" description="Phosphoserine" evidence="3">
    <location>
        <position position="296"/>
    </location>
</feature>
<feature type="modified residue" description="Phosphoserine" evidence="3">
    <location>
        <position position="299"/>
    </location>
</feature>
<feature type="modified residue" description="Phosphothreonine" evidence="2">
    <location>
        <position position="303"/>
    </location>
</feature>
<feature type="modified residue" description="Phosphoserine" evidence="3">
    <location>
        <position position="345"/>
    </location>
</feature>
<feature type="modified residue" description="Phosphothreonine" evidence="3">
    <location>
        <position position="348"/>
    </location>
</feature>
<feature type="modified residue" description="Phosphothreonine" evidence="2">
    <location>
        <position position="350"/>
    </location>
</feature>
<feature type="modified residue" description="Phosphoserine" evidence="3">
    <location>
        <position position="380"/>
    </location>
</feature>
<feature type="modified residue" description="Phosphoserine" evidence="3">
    <location>
        <position position="398"/>
    </location>
</feature>
<feature type="modified residue" description="Phosphoserine" evidence="3">
    <location>
        <position position="406"/>
    </location>
</feature>
<feature type="modified residue" description="Phosphoserine" evidence="3">
    <location>
        <position position="409"/>
    </location>
</feature>
<feature type="modified residue" description="Phosphothreonine" evidence="3">
    <location>
        <position position="411"/>
    </location>
</feature>
<feature type="modified residue" description="Phosphoserine" evidence="3">
    <location>
        <position position="415"/>
    </location>
</feature>
<feature type="modified residue" description="Phosphoserine" evidence="3">
    <location>
        <position position="425"/>
    </location>
</feature>
<feature type="modified residue" description="Phosphoserine" evidence="2">
    <location>
        <position position="429"/>
    </location>
</feature>
<feature type="modified residue" description="Phosphoserine" evidence="3">
    <location>
        <position position="432"/>
    </location>
</feature>
<feature type="modified residue" description="Phosphothreonine" evidence="3">
    <location>
        <position position="436"/>
    </location>
</feature>
<feature type="modified residue" description="Phosphoserine" evidence="3">
    <location>
        <position position="529"/>
    </location>
</feature>
<feature type="modified residue" description="Phosphoserine" evidence="3">
    <location>
        <position position="554"/>
    </location>
</feature>
<feature type="modified residue" description="Omega-N-methylarginine" evidence="3">
    <location>
        <position position="617"/>
    </location>
</feature>
<feature type="modified residue" description="Phosphoserine" evidence="3">
    <location>
        <position position="621"/>
    </location>
</feature>
<feature type="modified residue" description="Phosphothreonine" evidence="3">
    <location>
        <position position="659"/>
    </location>
</feature>
<feature type="modified residue" description="Phosphoserine" evidence="3">
    <location>
        <position position="684"/>
    </location>
</feature>
<feature type="modified residue" description="Phosphoserine" evidence="3">
    <location>
        <position position="694"/>
    </location>
</feature>
<feature type="modified residue" description="Omega-N-methylarginine" evidence="2">
    <location>
        <position position="697"/>
    </location>
</feature>
<protein>
    <recommendedName>
        <fullName>Palmitoyltransferase ZDHHC5</fullName>
        <ecNumber evidence="2">2.3.1.225</ecNumber>
    </recommendedName>
    <alternativeName>
        <fullName>Zinc finger DHHC domain-containing protein 5</fullName>
        <shortName>DHHC-5</shortName>
    </alternativeName>
</protein>
<gene>
    <name type="primary">ZDHHC5</name>
</gene>
<keyword id="KW-0012">Acyltransferase</keyword>
<keyword id="KW-1003">Cell membrane</keyword>
<keyword id="KW-0449">Lipoprotein</keyword>
<keyword id="KW-0472">Membrane</keyword>
<keyword id="KW-0488">Methylation</keyword>
<keyword id="KW-0564">Palmitate</keyword>
<keyword id="KW-0597">Phosphoprotein</keyword>
<keyword id="KW-1185">Reference proteome</keyword>
<keyword id="KW-0808">Transferase</keyword>
<keyword id="KW-0812">Transmembrane</keyword>
<keyword id="KW-1133">Transmembrane helix</keyword>
<accession>Q2THX1</accession>
<dbReference type="EC" id="2.3.1.225" evidence="2"/>
<dbReference type="EMBL" id="AY871199">
    <property type="protein sequence ID" value="AAX68532.1"/>
    <property type="molecule type" value="mRNA"/>
</dbReference>
<dbReference type="RefSeq" id="NP_001033746.1">
    <property type="nucleotide sequence ID" value="NM_001038657.1"/>
</dbReference>
<dbReference type="RefSeq" id="XP_016775294.1">
    <property type="nucleotide sequence ID" value="XM_016919805.4"/>
</dbReference>
<dbReference type="RefSeq" id="XP_016775295.1">
    <property type="nucleotide sequence ID" value="XM_016919806.4"/>
</dbReference>
<dbReference type="RefSeq" id="XP_063638568.1">
    <property type="nucleotide sequence ID" value="XM_063782498.1"/>
</dbReference>
<dbReference type="SMR" id="Q2THX1"/>
<dbReference type="FunCoup" id="Q2THX1">
    <property type="interactions" value="1935"/>
</dbReference>
<dbReference type="STRING" id="9598.ENSPTRP00000055157"/>
<dbReference type="PaxDb" id="9598-ENSPTRP00000055157"/>
<dbReference type="Ensembl" id="ENSPTRT00000062596.2">
    <property type="protein sequence ID" value="ENSPTRP00000055157.2"/>
    <property type="gene ID" value="ENSPTRG00000003666.7"/>
</dbReference>
<dbReference type="GeneID" id="451199"/>
<dbReference type="KEGG" id="ptr:451199"/>
<dbReference type="CTD" id="25921"/>
<dbReference type="VGNC" id="VGNC:53191">
    <property type="gene designation" value="ZDHHC5"/>
</dbReference>
<dbReference type="eggNOG" id="KOG1311">
    <property type="taxonomic scope" value="Eukaryota"/>
</dbReference>
<dbReference type="GeneTree" id="ENSGT00940000156001"/>
<dbReference type="InParanoid" id="Q2THX1"/>
<dbReference type="OMA" id="KMTRGES"/>
<dbReference type="OrthoDB" id="9511at9604"/>
<dbReference type="Proteomes" id="UP000002277">
    <property type="component" value="Chromosome 11"/>
</dbReference>
<dbReference type="Bgee" id="ENSPTRG00000003666">
    <property type="expression patterns" value="Expressed in fibroblast and 21 other cell types or tissues"/>
</dbReference>
<dbReference type="GO" id="GO:0030425">
    <property type="term" value="C:dendrite"/>
    <property type="evidence" value="ECO:0007669"/>
    <property type="project" value="Ensembl"/>
</dbReference>
<dbReference type="GO" id="GO:0098978">
    <property type="term" value="C:glutamatergic synapse"/>
    <property type="evidence" value="ECO:0007669"/>
    <property type="project" value="Ensembl"/>
</dbReference>
<dbReference type="GO" id="GO:0005654">
    <property type="term" value="C:nucleoplasm"/>
    <property type="evidence" value="ECO:0007669"/>
    <property type="project" value="Ensembl"/>
</dbReference>
<dbReference type="GO" id="GO:0045335">
    <property type="term" value="C:phagocytic vesicle"/>
    <property type="evidence" value="ECO:0007669"/>
    <property type="project" value="Ensembl"/>
</dbReference>
<dbReference type="GO" id="GO:0005886">
    <property type="term" value="C:plasma membrane"/>
    <property type="evidence" value="ECO:0000318"/>
    <property type="project" value="GO_Central"/>
</dbReference>
<dbReference type="GO" id="GO:0098794">
    <property type="term" value="C:postsynapse"/>
    <property type="evidence" value="ECO:0007669"/>
    <property type="project" value="Ensembl"/>
</dbReference>
<dbReference type="GO" id="GO:0016409">
    <property type="term" value="F:palmitoyltransferase activity"/>
    <property type="evidence" value="ECO:0000318"/>
    <property type="project" value="GO_Central"/>
</dbReference>
<dbReference type="GO" id="GO:0019706">
    <property type="term" value="F:protein-cysteine S-palmitoyltransferase activity"/>
    <property type="evidence" value="ECO:0000250"/>
    <property type="project" value="UniProtKB"/>
</dbReference>
<dbReference type="GO" id="GO:1900227">
    <property type="term" value="P:positive regulation of NLRP3 inflammasome complex assembly"/>
    <property type="evidence" value="ECO:0007669"/>
    <property type="project" value="Ensembl"/>
</dbReference>
<dbReference type="GO" id="GO:0062208">
    <property type="term" value="P:positive regulation of pattern recognition receptor signaling pathway"/>
    <property type="evidence" value="ECO:0000318"/>
    <property type="project" value="GO_Central"/>
</dbReference>
<dbReference type="GO" id="GO:1905171">
    <property type="term" value="P:positive regulation of protein localization to phagocytic vesicle"/>
    <property type="evidence" value="ECO:0007669"/>
    <property type="project" value="Ensembl"/>
</dbReference>
<dbReference type="GO" id="GO:1903078">
    <property type="term" value="P:positive regulation of protein localization to plasma membrane"/>
    <property type="evidence" value="ECO:0007669"/>
    <property type="project" value="Ensembl"/>
</dbReference>
<dbReference type="GO" id="GO:0140639">
    <property type="term" value="P:positive regulation of pyroptotic inflammatory response"/>
    <property type="evidence" value="ECO:0000250"/>
    <property type="project" value="UniProtKB"/>
</dbReference>
<dbReference type="GO" id="GO:0072659">
    <property type="term" value="P:protein localization to plasma membrane"/>
    <property type="evidence" value="ECO:0007669"/>
    <property type="project" value="Ensembl"/>
</dbReference>
<dbReference type="InterPro" id="IPR001594">
    <property type="entry name" value="Palmitoyltrfase_DHHC"/>
</dbReference>
<dbReference type="PANTHER" id="PTHR12349">
    <property type="entry name" value="ANKYRIN REPEAT AND LEM DOMAIN-CONTAINING PROTEIN 2"/>
    <property type="match status" value="1"/>
</dbReference>
<dbReference type="PANTHER" id="PTHR12349:SF3">
    <property type="entry name" value="PALMITOYLTRANSFERASE ZDHHC5"/>
    <property type="match status" value="1"/>
</dbReference>
<dbReference type="Pfam" id="PF01529">
    <property type="entry name" value="DHHC"/>
    <property type="match status" value="1"/>
</dbReference>
<dbReference type="PROSITE" id="PS50216">
    <property type="entry name" value="DHHC"/>
    <property type="match status" value="1"/>
</dbReference>
<name>ZDHC5_PANTR</name>